<accession>Q92JL8</accession>
<proteinExistence type="predicted"/>
<name>Y049_RICCN</name>
<reference key="1">
    <citation type="journal article" date="2001" name="Science">
        <title>Mechanisms of evolution in Rickettsia conorii and R. prowazekii.</title>
        <authorList>
            <person name="Ogata H."/>
            <person name="Audic S."/>
            <person name="Renesto-Audiffren P."/>
            <person name="Fournier P.-E."/>
            <person name="Barbe V."/>
            <person name="Samson D."/>
            <person name="Roux V."/>
            <person name="Cossart P."/>
            <person name="Weissenbach J."/>
            <person name="Claverie J.-M."/>
            <person name="Raoult D."/>
        </authorList>
    </citation>
    <scope>NUCLEOTIDE SEQUENCE [LARGE SCALE GENOMIC DNA]</scope>
    <source>
        <strain>ATCC VR-613 / Malish 7</strain>
    </source>
</reference>
<feature type="chain" id="PRO_0000101439" description="Uncharacterized protein RC0049">
    <location>
        <begin position="1"/>
        <end position="174"/>
    </location>
</feature>
<gene>
    <name type="ordered locus">RC0049</name>
</gene>
<sequence length="174" mass="20399">MIAQNHFKKIAISSTGIRRGVEDFLNQKYFADKFTEEEQGCFVLFLAYKIFRYGNKVCLKYFSEQQPELITKIFDDYPHLFFRREAINICIKNKDGRQKALDAIKLKSSNKFFKDCFDTVFPKVDVVVNLIFEEEPKPKHVPNEPELVFNLELIPLNIDENDDVLPTSNVENNH</sequence>
<protein>
    <recommendedName>
        <fullName>Uncharacterized protein RC0049</fullName>
    </recommendedName>
</protein>
<organism>
    <name type="scientific">Rickettsia conorii (strain ATCC VR-613 / Malish 7)</name>
    <dbReference type="NCBI Taxonomy" id="272944"/>
    <lineage>
        <taxon>Bacteria</taxon>
        <taxon>Pseudomonadati</taxon>
        <taxon>Pseudomonadota</taxon>
        <taxon>Alphaproteobacteria</taxon>
        <taxon>Rickettsiales</taxon>
        <taxon>Rickettsiaceae</taxon>
        <taxon>Rickettsieae</taxon>
        <taxon>Rickettsia</taxon>
        <taxon>spotted fever group</taxon>
    </lineage>
</organism>
<dbReference type="EMBL" id="AE006914">
    <property type="protein sequence ID" value="AAL02587.1"/>
    <property type="molecule type" value="Genomic_DNA"/>
</dbReference>
<dbReference type="PIR" id="A97706">
    <property type="entry name" value="A97706"/>
</dbReference>
<dbReference type="RefSeq" id="WP_010976736.1">
    <property type="nucleotide sequence ID" value="NC_003103.1"/>
</dbReference>
<dbReference type="GeneID" id="928615"/>
<dbReference type="KEGG" id="rco:RC0049"/>
<dbReference type="PATRIC" id="fig|272944.4.peg.59"/>
<dbReference type="HOGENOM" id="CLU_139173_0_0_5"/>
<dbReference type="Proteomes" id="UP000000816">
    <property type="component" value="Chromosome"/>
</dbReference>